<sequence length="295" mass="32462">MPWIQIKLNATNENAELIGDMLMEETGALSVTFLDAHDTPVFEPLPGETRLWGDTDVLALYDAEADTQLIMSQIKASNMLAEGFAYKIEQLEDKDWEREWMDNFHPMKFGQRLWICPSWRDIPDPTAVNVMLDPGLAFGTGTHPTTALCLEWLESLDLSGKTVIDFGCGSGILAIAAIKLGAEKVIGIDIDPQALLASKDNAQRNGVADQLDVYLPQDQPEGLLADVVVANILAAPLRELSSIIKGLVKPNGQLAMSGVLDTQAEDVANYYRDELHIDPIVEQSEWCRISGRKQG</sequence>
<dbReference type="EC" id="2.1.1.-" evidence="1"/>
<dbReference type="EMBL" id="AE016795">
    <property type="protein sequence ID" value="AAO09690.1"/>
    <property type="molecule type" value="Genomic_DNA"/>
</dbReference>
<dbReference type="RefSeq" id="WP_011079219.1">
    <property type="nucleotide sequence ID" value="NC_004459.3"/>
</dbReference>
<dbReference type="SMR" id="Q8DD03"/>
<dbReference type="KEGG" id="vvu:VV1_1233"/>
<dbReference type="HOGENOM" id="CLU_049382_4_1_6"/>
<dbReference type="Proteomes" id="UP000002275">
    <property type="component" value="Chromosome 1"/>
</dbReference>
<dbReference type="GO" id="GO:0005829">
    <property type="term" value="C:cytosol"/>
    <property type="evidence" value="ECO:0007669"/>
    <property type="project" value="TreeGrafter"/>
</dbReference>
<dbReference type="GO" id="GO:0016279">
    <property type="term" value="F:protein-lysine N-methyltransferase activity"/>
    <property type="evidence" value="ECO:0007669"/>
    <property type="project" value="TreeGrafter"/>
</dbReference>
<dbReference type="GO" id="GO:0032259">
    <property type="term" value="P:methylation"/>
    <property type="evidence" value="ECO:0007669"/>
    <property type="project" value="UniProtKB-KW"/>
</dbReference>
<dbReference type="CDD" id="cd02440">
    <property type="entry name" value="AdoMet_MTases"/>
    <property type="match status" value="1"/>
</dbReference>
<dbReference type="Gene3D" id="3.40.50.150">
    <property type="entry name" value="Vaccinia Virus protein VP39"/>
    <property type="match status" value="1"/>
</dbReference>
<dbReference type="HAMAP" id="MF_00735">
    <property type="entry name" value="Methyltr_PrmA"/>
    <property type="match status" value="1"/>
</dbReference>
<dbReference type="InterPro" id="IPR050078">
    <property type="entry name" value="Ribosomal_L11_MeTrfase_PrmA"/>
</dbReference>
<dbReference type="InterPro" id="IPR004498">
    <property type="entry name" value="Ribosomal_PrmA_MeTrfase"/>
</dbReference>
<dbReference type="InterPro" id="IPR029063">
    <property type="entry name" value="SAM-dependent_MTases_sf"/>
</dbReference>
<dbReference type="NCBIfam" id="TIGR00406">
    <property type="entry name" value="prmA"/>
    <property type="match status" value="1"/>
</dbReference>
<dbReference type="PANTHER" id="PTHR43648">
    <property type="entry name" value="ELECTRON TRANSFER FLAVOPROTEIN BETA SUBUNIT LYSINE METHYLTRANSFERASE"/>
    <property type="match status" value="1"/>
</dbReference>
<dbReference type="PANTHER" id="PTHR43648:SF1">
    <property type="entry name" value="ELECTRON TRANSFER FLAVOPROTEIN BETA SUBUNIT LYSINE METHYLTRANSFERASE"/>
    <property type="match status" value="1"/>
</dbReference>
<dbReference type="Pfam" id="PF06325">
    <property type="entry name" value="PrmA"/>
    <property type="match status" value="1"/>
</dbReference>
<dbReference type="PIRSF" id="PIRSF000401">
    <property type="entry name" value="RPL11_MTase"/>
    <property type="match status" value="1"/>
</dbReference>
<dbReference type="SUPFAM" id="SSF53335">
    <property type="entry name" value="S-adenosyl-L-methionine-dependent methyltransferases"/>
    <property type="match status" value="1"/>
</dbReference>
<protein>
    <recommendedName>
        <fullName evidence="1">Ribosomal protein L11 methyltransferase</fullName>
        <shortName evidence="1">L11 Mtase</shortName>
        <ecNumber evidence="1">2.1.1.-</ecNumber>
    </recommendedName>
</protein>
<evidence type="ECO:0000255" key="1">
    <source>
        <dbReference type="HAMAP-Rule" id="MF_00735"/>
    </source>
</evidence>
<accession>Q8DD03</accession>
<name>PRMA_VIBVU</name>
<keyword id="KW-0963">Cytoplasm</keyword>
<keyword id="KW-0489">Methyltransferase</keyword>
<keyword id="KW-0949">S-adenosyl-L-methionine</keyword>
<keyword id="KW-0808">Transferase</keyword>
<gene>
    <name evidence="1" type="primary">prmA</name>
    <name type="ordered locus">VV1_1233</name>
</gene>
<organism>
    <name type="scientific">Vibrio vulnificus (strain CMCP6)</name>
    <dbReference type="NCBI Taxonomy" id="216895"/>
    <lineage>
        <taxon>Bacteria</taxon>
        <taxon>Pseudomonadati</taxon>
        <taxon>Pseudomonadota</taxon>
        <taxon>Gammaproteobacteria</taxon>
        <taxon>Vibrionales</taxon>
        <taxon>Vibrionaceae</taxon>
        <taxon>Vibrio</taxon>
    </lineage>
</organism>
<proteinExistence type="inferred from homology"/>
<comment type="function">
    <text evidence="1">Methylates ribosomal protein L11.</text>
</comment>
<comment type="catalytic activity">
    <reaction evidence="1">
        <text>L-lysyl-[protein] + 3 S-adenosyl-L-methionine = N(6),N(6),N(6)-trimethyl-L-lysyl-[protein] + 3 S-adenosyl-L-homocysteine + 3 H(+)</text>
        <dbReference type="Rhea" id="RHEA:54192"/>
        <dbReference type="Rhea" id="RHEA-COMP:9752"/>
        <dbReference type="Rhea" id="RHEA-COMP:13826"/>
        <dbReference type="ChEBI" id="CHEBI:15378"/>
        <dbReference type="ChEBI" id="CHEBI:29969"/>
        <dbReference type="ChEBI" id="CHEBI:57856"/>
        <dbReference type="ChEBI" id="CHEBI:59789"/>
        <dbReference type="ChEBI" id="CHEBI:61961"/>
    </reaction>
</comment>
<comment type="subcellular location">
    <subcellularLocation>
        <location evidence="1">Cytoplasm</location>
    </subcellularLocation>
</comment>
<comment type="similarity">
    <text evidence="1">Belongs to the methyltransferase superfamily. PrmA family.</text>
</comment>
<reference key="1">
    <citation type="submission" date="2002-12" db="EMBL/GenBank/DDBJ databases">
        <title>Complete genome sequence of Vibrio vulnificus CMCP6.</title>
        <authorList>
            <person name="Rhee J.H."/>
            <person name="Kim S.Y."/>
            <person name="Chung S.S."/>
            <person name="Kim J.J."/>
            <person name="Moon Y.H."/>
            <person name="Jeong H."/>
            <person name="Choy H.E."/>
        </authorList>
    </citation>
    <scope>NUCLEOTIDE SEQUENCE [LARGE SCALE GENOMIC DNA]</scope>
    <source>
        <strain>CMCP6</strain>
    </source>
</reference>
<feature type="chain" id="PRO_0000192332" description="Ribosomal protein L11 methyltransferase">
    <location>
        <begin position="1"/>
        <end position="295"/>
    </location>
</feature>
<feature type="binding site" evidence="1">
    <location>
        <position position="146"/>
    </location>
    <ligand>
        <name>S-adenosyl-L-methionine</name>
        <dbReference type="ChEBI" id="CHEBI:59789"/>
    </ligand>
</feature>
<feature type="binding site" evidence="1">
    <location>
        <position position="167"/>
    </location>
    <ligand>
        <name>S-adenosyl-L-methionine</name>
        <dbReference type="ChEBI" id="CHEBI:59789"/>
    </ligand>
</feature>
<feature type="binding site" evidence="1">
    <location>
        <position position="189"/>
    </location>
    <ligand>
        <name>S-adenosyl-L-methionine</name>
        <dbReference type="ChEBI" id="CHEBI:59789"/>
    </ligand>
</feature>
<feature type="binding site" evidence="1">
    <location>
        <position position="231"/>
    </location>
    <ligand>
        <name>S-adenosyl-L-methionine</name>
        <dbReference type="ChEBI" id="CHEBI:59789"/>
    </ligand>
</feature>